<comment type="function">
    <text evidence="1">Catalyzes the reversible conversion of ribose-5-phosphate to ribulose 5-phosphate.</text>
</comment>
<comment type="catalytic activity">
    <reaction evidence="1">
        <text>aldehydo-D-ribose 5-phosphate = D-ribulose 5-phosphate</text>
        <dbReference type="Rhea" id="RHEA:14657"/>
        <dbReference type="ChEBI" id="CHEBI:58121"/>
        <dbReference type="ChEBI" id="CHEBI:58273"/>
        <dbReference type="EC" id="5.3.1.6"/>
    </reaction>
</comment>
<comment type="pathway">
    <text evidence="1">Carbohydrate degradation; pentose phosphate pathway; D-ribose 5-phosphate from D-ribulose 5-phosphate (non-oxidative stage): step 1/1.</text>
</comment>
<comment type="subunit">
    <text evidence="1">Homodimer.</text>
</comment>
<comment type="similarity">
    <text evidence="1">Belongs to the ribose 5-phosphate isomerase family.</text>
</comment>
<comment type="sequence caution" evidence="2">
    <conflict type="erroneous initiation">
        <sequence resource="EMBL-CDS" id="AAM38254"/>
    </conflict>
</comment>
<sequence length="215" mass="22873">MSEAKRLAAEKAIDYVEDGMIVGVGTGSTVAYFIDALGRIGHRIKGAVSSSEQSTARLRQHGIEVLDLNHTGNLSLYVDGADECDPNRCLIKGGGAALTREKIIAEASERFICIVDPSKQVPVLGKFPLPVEVIPMARSLVARQILALTGGQPVWRDGVVTDNGNVVLDVHHLQVTDPVGLERSLNQIPGVVCVGLFARRPADVVIVGGEPPQVI</sequence>
<proteinExistence type="inferred from homology"/>
<protein>
    <recommendedName>
        <fullName evidence="1">Ribose-5-phosphate isomerase A</fullName>
        <ecNumber evidence="1">5.3.1.6</ecNumber>
    </recommendedName>
    <alternativeName>
        <fullName evidence="1">Phosphoriboisomerase A</fullName>
        <shortName evidence="1">PRI</shortName>
    </alternativeName>
</protein>
<name>RPIA_XANAC</name>
<dbReference type="EC" id="5.3.1.6" evidence="1"/>
<dbReference type="EMBL" id="AE008923">
    <property type="protein sequence ID" value="AAM38254.1"/>
    <property type="status" value="ALT_INIT"/>
    <property type="molecule type" value="Genomic_DNA"/>
</dbReference>
<dbReference type="RefSeq" id="WP_011052255.1">
    <property type="nucleotide sequence ID" value="NC_003919.1"/>
</dbReference>
<dbReference type="SMR" id="Q8PH49"/>
<dbReference type="GeneID" id="66912458"/>
<dbReference type="KEGG" id="xac:XAC3411"/>
<dbReference type="eggNOG" id="COG0120">
    <property type="taxonomic scope" value="Bacteria"/>
</dbReference>
<dbReference type="HOGENOM" id="CLU_056590_1_1_6"/>
<dbReference type="UniPathway" id="UPA00115">
    <property type="reaction ID" value="UER00412"/>
</dbReference>
<dbReference type="Proteomes" id="UP000000576">
    <property type="component" value="Chromosome"/>
</dbReference>
<dbReference type="GO" id="GO:0005829">
    <property type="term" value="C:cytosol"/>
    <property type="evidence" value="ECO:0007669"/>
    <property type="project" value="TreeGrafter"/>
</dbReference>
<dbReference type="GO" id="GO:0004751">
    <property type="term" value="F:ribose-5-phosphate isomerase activity"/>
    <property type="evidence" value="ECO:0007669"/>
    <property type="project" value="UniProtKB-UniRule"/>
</dbReference>
<dbReference type="GO" id="GO:0006014">
    <property type="term" value="P:D-ribose metabolic process"/>
    <property type="evidence" value="ECO:0007669"/>
    <property type="project" value="TreeGrafter"/>
</dbReference>
<dbReference type="GO" id="GO:0009052">
    <property type="term" value="P:pentose-phosphate shunt, non-oxidative branch"/>
    <property type="evidence" value="ECO:0007669"/>
    <property type="project" value="UniProtKB-UniRule"/>
</dbReference>
<dbReference type="CDD" id="cd01398">
    <property type="entry name" value="RPI_A"/>
    <property type="match status" value="1"/>
</dbReference>
<dbReference type="FunFam" id="3.30.70.260:FF:000004">
    <property type="entry name" value="Ribose-5-phosphate isomerase A"/>
    <property type="match status" value="1"/>
</dbReference>
<dbReference type="FunFam" id="3.40.50.1360:FF:000001">
    <property type="entry name" value="Ribose-5-phosphate isomerase A"/>
    <property type="match status" value="1"/>
</dbReference>
<dbReference type="Gene3D" id="3.30.70.260">
    <property type="match status" value="1"/>
</dbReference>
<dbReference type="Gene3D" id="3.40.50.1360">
    <property type="match status" value="1"/>
</dbReference>
<dbReference type="HAMAP" id="MF_00170">
    <property type="entry name" value="Rib_5P_isom_A"/>
    <property type="match status" value="1"/>
</dbReference>
<dbReference type="InterPro" id="IPR037171">
    <property type="entry name" value="NagB/RpiA_transferase-like"/>
</dbReference>
<dbReference type="InterPro" id="IPR020672">
    <property type="entry name" value="Ribose5P_isomerase_typA_subgr"/>
</dbReference>
<dbReference type="InterPro" id="IPR004788">
    <property type="entry name" value="Ribose5P_isomerase_type_A"/>
</dbReference>
<dbReference type="NCBIfam" id="NF001924">
    <property type="entry name" value="PRK00702.1"/>
    <property type="match status" value="1"/>
</dbReference>
<dbReference type="NCBIfam" id="TIGR00021">
    <property type="entry name" value="rpiA"/>
    <property type="match status" value="1"/>
</dbReference>
<dbReference type="PANTHER" id="PTHR11934">
    <property type="entry name" value="RIBOSE-5-PHOSPHATE ISOMERASE"/>
    <property type="match status" value="1"/>
</dbReference>
<dbReference type="PANTHER" id="PTHR11934:SF0">
    <property type="entry name" value="RIBOSE-5-PHOSPHATE ISOMERASE"/>
    <property type="match status" value="1"/>
</dbReference>
<dbReference type="Pfam" id="PF06026">
    <property type="entry name" value="Rib_5-P_isom_A"/>
    <property type="match status" value="1"/>
</dbReference>
<dbReference type="SUPFAM" id="SSF75445">
    <property type="entry name" value="D-ribose-5-phosphate isomerase (RpiA), lid domain"/>
    <property type="match status" value="1"/>
</dbReference>
<dbReference type="SUPFAM" id="SSF100950">
    <property type="entry name" value="NagB/RpiA/CoA transferase-like"/>
    <property type="match status" value="1"/>
</dbReference>
<keyword id="KW-0413">Isomerase</keyword>
<reference key="1">
    <citation type="journal article" date="2002" name="Nature">
        <title>Comparison of the genomes of two Xanthomonas pathogens with differing host specificities.</title>
        <authorList>
            <person name="da Silva A.C.R."/>
            <person name="Ferro J.A."/>
            <person name="Reinach F.C."/>
            <person name="Farah C.S."/>
            <person name="Furlan L.R."/>
            <person name="Quaggio R.B."/>
            <person name="Monteiro-Vitorello C.B."/>
            <person name="Van Sluys M.A."/>
            <person name="Almeida N.F. Jr."/>
            <person name="Alves L.M.C."/>
            <person name="do Amaral A.M."/>
            <person name="Bertolini M.C."/>
            <person name="Camargo L.E.A."/>
            <person name="Camarotte G."/>
            <person name="Cannavan F."/>
            <person name="Cardozo J."/>
            <person name="Chambergo F."/>
            <person name="Ciapina L.P."/>
            <person name="Cicarelli R.M.B."/>
            <person name="Coutinho L.L."/>
            <person name="Cursino-Santos J.R."/>
            <person name="El-Dorry H."/>
            <person name="Faria J.B."/>
            <person name="Ferreira A.J.S."/>
            <person name="Ferreira R.C.C."/>
            <person name="Ferro M.I.T."/>
            <person name="Formighieri E.F."/>
            <person name="Franco M.C."/>
            <person name="Greggio C.C."/>
            <person name="Gruber A."/>
            <person name="Katsuyama A.M."/>
            <person name="Kishi L.T."/>
            <person name="Leite R.P."/>
            <person name="Lemos E.G.M."/>
            <person name="Lemos M.V.F."/>
            <person name="Locali E.C."/>
            <person name="Machado M.A."/>
            <person name="Madeira A.M.B.N."/>
            <person name="Martinez-Rossi N.M."/>
            <person name="Martins E.C."/>
            <person name="Meidanis J."/>
            <person name="Menck C.F.M."/>
            <person name="Miyaki C.Y."/>
            <person name="Moon D.H."/>
            <person name="Moreira L.M."/>
            <person name="Novo M.T.M."/>
            <person name="Okura V.K."/>
            <person name="Oliveira M.C."/>
            <person name="Oliveira V.R."/>
            <person name="Pereira H.A."/>
            <person name="Rossi A."/>
            <person name="Sena J.A.D."/>
            <person name="Silva C."/>
            <person name="de Souza R.F."/>
            <person name="Spinola L.A.F."/>
            <person name="Takita M.A."/>
            <person name="Tamura R.E."/>
            <person name="Teixeira E.C."/>
            <person name="Tezza R.I.D."/>
            <person name="Trindade dos Santos M."/>
            <person name="Truffi D."/>
            <person name="Tsai S.M."/>
            <person name="White F.F."/>
            <person name="Setubal J.C."/>
            <person name="Kitajima J.P."/>
        </authorList>
    </citation>
    <scope>NUCLEOTIDE SEQUENCE [LARGE SCALE GENOMIC DNA]</scope>
    <source>
        <strain>306</strain>
    </source>
</reference>
<gene>
    <name evidence="1" type="primary">rpiA</name>
    <name type="ordered locus">XAC3411</name>
</gene>
<evidence type="ECO:0000255" key="1">
    <source>
        <dbReference type="HAMAP-Rule" id="MF_00170"/>
    </source>
</evidence>
<evidence type="ECO:0000305" key="2"/>
<organism>
    <name type="scientific">Xanthomonas axonopodis pv. citri (strain 306)</name>
    <dbReference type="NCBI Taxonomy" id="190486"/>
    <lineage>
        <taxon>Bacteria</taxon>
        <taxon>Pseudomonadati</taxon>
        <taxon>Pseudomonadota</taxon>
        <taxon>Gammaproteobacteria</taxon>
        <taxon>Lysobacterales</taxon>
        <taxon>Lysobacteraceae</taxon>
        <taxon>Xanthomonas</taxon>
    </lineage>
</organism>
<accession>Q8PH49</accession>
<feature type="chain" id="PRO_0000158496" description="Ribose-5-phosphate isomerase A">
    <location>
        <begin position="1"/>
        <end position="215"/>
    </location>
</feature>
<feature type="active site" description="Proton acceptor" evidence="1">
    <location>
        <position position="101"/>
    </location>
</feature>
<feature type="binding site" evidence="1">
    <location>
        <begin position="26"/>
        <end position="29"/>
    </location>
    <ligand>
        <name>substrate</name>
    </ligand>
</feature>
<feature type="binding site" evidence="1">
    <location>
        <begin position="79"/>
        <end position="82"/>
    </location>
    <ligand>
        <name>substrate</name>
    </ligand>
</feature>
<feature type="binding site" evidence="1">
    <location>
        <begin position="92"/>
        <end position="95"/>
    </location>
    <ligand>
        <name>substrate</name>
    </ligand>
</feature>
<feature type="binding site" evidence="1">
    <location>
        <position position="119"/>
    </location>
    <ligand>
        <name>substrate</name>
    </ligand>
</feature>